<sequence>MSSKKNFEVGENVACIYKGKPYDAKITDIKTNSDGKELYCVHFKGWNNRYDEKIPVGEEKDRIFKGTASEYAEKHNAELPTTALKPKKKSLAAEAPRDDRDDTPGTSKGKKAKSVTIAPVMTADDMKVELPKPLRKILIDDYDLVCRYFINIVPHEYSVDQIIEDYIKTIPVSNEQMRTVDDLLIEYEEADIKITNLALICTARGLVDYFNVTLGSSYQLLYKFERPQYNDLVKKRAMEKGIDITNPTALQDSGFRPSQEYGIVHFLRMLAKLPDYLKLTQWNDHVINRIMIGVHDLIVFLNKNHGKYYRGSSDYQGASNDYYRRSLAADDGVGANQ</sequence>
<reference evidence="15" key="1">
    <citation type="journal article" date="1998" name="Science">
        <title>Genome sequence of the nematode C. elegans: a platform for investigating biology.</title>
        <authorList>
            <consortium name="The C. elegans sequencing consortium"/>
        </authorList>
    </citation>
    <scope>NUCLEOTIDE SEQUENCE [LARGE SCALE GENOMIC DNA]</scope>
    <source>
        <strain evidence="15">Bristol N2</strain>
    </source>
</reference>
<reference evidence="14" key="2">
    <citation type="journal article" date="2002" name="Mech. Dev.">
        <title>MRG-1, a mortality factor-related chromodomain protein, is required maternally for primordial germ cells to initiate mitotic proliferation in C. elegans.</title>
        <authorList>
            <person name="Fujita M."/>
            <person name="Takasaki T."/>
            <person name="Nakajima N."/>
            <person name="Kawano T."/>
            <person name="Shimura Y."/>
            <person name="Sakamoto H."/>
        </authorList>
    </citation>
    <scope>FUNCTION</scope>
    <scope>TISSUE SPECIFICITY</scope>
    <scope>DEVELOPMENTAL STAGE</scope>
    <scope>DISRUPTION PHENOTYPE</scope>
</reference>
<reference evidence="14" key="3">
    <citation type="journal article" date="2007" name="Development">
        <title>MRG-1, an autosome-associated protein, silences X-linked genes and protects germline immortality in Caenorhabditis elegans.</title>
        <authorList>
            <person name="Takasaki T."/>
            <person name="Liu Z."/>
            <person name="Habara Y."/>
            <person name="Nishiwaki K."/>
            <person name="Nakayama J."/>
            <person name="Inoue K."/>
            <person name="Sakamoto H."/>
            <person name="Strome S."/>
        </authorList>
    </citation>
    <scope>FUNCTION</scope>
    <scope>SUBCELLULAR LOCATION</scope>
    <scope>TISSUE SPECIFICITY</scope>
    <scope>DEVELOPMENTAL STAGE</scope>
    <scope>DISRUPTION PHENOTYPE</scope>
</reference>
<reference evidence="14" key="4">
    <citation type="journal article" date="2011" name="Dev. Cell">
        <title>The chromodomain protein MRG-1 facilitates SC-independent homologous pairing during meiosis in Caenorhabditis elegans.</title>
        <authorList>
            <person name="Dombecki C.R."/>
            <person name="Chiang A.C."/>
            <person name="Kang H.J."/>
            <person name="Bilgir C."/>
            <person name="Stefanski N.A."/>
            <person name="Neva B.J."/>
            <person name="Klerkx E.P."/>
            <person name="Nabeshima K."/>
        </authorList>
    </citation>
    <scope>FUNCTION</scope>
    <scope>SUBCELLULAR LOCATION</scope>
    <scope>DISRUPTION PHENOTYPE</scope>
</reference>
<reference evidence="14" key="5">
    <citation type="journal article" date="2012" name="Cell Res.">
        <title>MRG-1 is required for genomic integrity in Caenorhabditis elegans germ cells.</title>
        <authorList>
            <person name="Xu J."/>
            <person name="Sun X."/>
            <person name="Jing Y."/>
            <person name="Wang M."/>
            <person name="Liu K."/>
            <person name="Jian Y."/>
            <person name="Yang M."/>
            <person name="Cheng Z."/>
            <person name="Yang C."/>
        </authorList>
    </citation>
    <scope>FUNCTION</scope>
    <scope>DISRUPTION PHENOTYPE</scope>
</reference>
<reference evidence="14" key="6">
    <citation type="journal article" date="2015" name="Development">
        <title>Proteasome regulation of the chromodomain protein MRG-1 controls the balance between proliferative fate and differentiation in the C. elegans germ line.</title>
        <authorList>
            <person name="Gupta P."/>
            <person name="Leahul L."/>
            <person name="Wang X."/>
            <person name="Wang C."/>
            <person name="Bakos B."/>
            <person name="Jasper K."/>
            <person name="Hansen D."/>
        </authorList>
    </citation>
    <scope>INTERACTION WITH RFP-1</scope>
    <scope>DEVELOPMENTAL STAGE</scope>
    <scope>DISRUPTION PHENOTYPE</scope>
</reference>
<reference evidence="14" key="7">
    <citation type="journal article" date="2019" name="Genes Cells">
        <title>MRG-1 is required for both chromatin-based transcriptional silencing and genomic integrity of primordial germ cells in Caenorhabditis elegans.</title>
        <authorList>
            <person name="Miwa T."/>
            <person name="Inoue K."/>
            <person name="Sakamoto H."/>
        </authorList>
    </citation>
    <scope>FUNCTION</scope>
    <scope>DEVELOPMENTAL STAGE</scope>
</reference>
<reference evidence="14" key="8">
    <citation type="journal article" date="2019" name="Genetics">
        <title>MRG-1/MRG15 Is a Barrier for Germ Cell to Neuron Reprogramming in Caenorhabditis elegans.</title>
        <authorList>
            <person name="Hajduskova M."/>
            <person name="Baytek G."/>
            <person name="Kolundzic E."/>
            <person name="Gosdschan A."/>
            <person name="Kazmierczak M."/>
            <person name="Ofenbauer A."/>
            <person name="Beato Del Rosal M.L."/>
            <person name="Herzog S."/>
            <person name="Ul Fatima N."/>
            <person name="Mertins P."/>
            <person name="Seelk-Muethel S."/>
            <person name="Tursun B."/>
        </authorList>
    </citation>
    <scope>FUNCTION</scope>
    <scope>DISRUPTION PHENOTYPE</scope>
</reference>
<reference evidence="14" key="9">
    <citation type="journal article" date="2019" name="Nature">
        <title>Active chromatin marks drive spatial sequestration of heterochromatin in C. elegans nuclei.</title>
        <authorList>
            <person name="Cabianca D.S."/>
            <person name="Munoz-Jimenez C."/>
            <person name="Kalck V."/>
            <person name="Gaidatzis D."/>
            <person name="Padeken J."/>
            <person name="Seeber A."/>
            <person name="Askjaer P."/>
            <person name="Gasser S.M."/>
        </authorList>
    </citation>
    <scope>FUNCTION</scope>
    <scope>SUBCELLULAR LOCATION</scope>
    <scope>DISRUPTION PHENOTYPE</scope>
</reference>
<reference evidence="14" key="10">
    <citation type="journal article" date="2019" name="Nucleic Acids Res.">
        <title>Physical and functional interaction between SET1/COMPASS complex component CFP-1 and a Sin3S HDAC complex in C. elegans.</title>
        <authorList>
            <person name="Beurton F."/>
            <person name="Stempor P."/>
            <person name="Caron M."/>
            <person name="Appert A."/>
            <person name="Dong Y."/>
            <person name="Chen R.A."/>
            <person name="Cluet D."/>
            <person name="Coute Y."/>
            <person name="Herbette M."/>
            <person name="Huang N."/>
            <person name="Polveche H."/>
            <person name="Spichty M."/>
            <person name="Bedet C."/>
            <person name="Ahringer J."/>
            <person name="Palladino F."/>
        </authorList>
    </citation>
    <scope>IDENTIFICATION IN THE SIN3S COMPLEX</scope>
    <scope>INTERACTION WITH CFP-1</scope>
    <scope>IDENTIFICATION BY MASS SPECTROMETRY</scope>
</reference>
<dbReference type="EMBL" id="BX284603">
    <property type="protein sequence ID" value="CAA21528.1"/>
    <property type="molecule type" value="Genomic_DNA"/>
</dbReference>
<dbReference type="EMBL" id="BX284603">
    <property type="protein sequence ID" value="CAO82072.1"/>
    <property type="molecule type" value="Genomic_DNA"/>
</dbReference>
<dbReference type="PIR" id="T26627">
    <property type="entry name" value="T26627"/>
</dbReference>
<dbReference type="RefSeq" id="NP_001122727.1">
    <molecule id="A7DTF0-1"/>
    <property type="nucleotide sequence ID" value="NM_001129255.6"/>
</dbReference>
<dbReference type="RefSeq" id="NP_499675.1">
    <molecule id="A7DTF0-2"/>
    <property type="nucleotide sequence ID" value="NM_067274.6"/>
</dbReference>
<dbReference type="SMR" id="A7DTF0"/>
<dbReference type="FunCoup" id="A7DTF0">
    <property type="interactions" value="2720"/>
</dbReference>
<dbReference type="IntAct" id="A7DTF0">
    <property type="interactions" value="5"/>
</dbReference>
<dbReference type="STRING" id="6239.Y37D8A.9b.1"/>
<dbReference type="iPTMnet" id="A7DTF0"/>
<dbReference type="PaxDb" id="6239-Y37D8A.9b"/>
<dbReference type="PeptideAtlas" id="A7DTF0"/>
<dbReference type="EnsemblMetazoa" id="Y37D8A.9a.1">
    <molecule id="A7DTF0-2"/>
    <property type="protein sequence ID" value="Y37D8A.9a.1"/>
    <property type="gene ID" value="WBGene00003406"/>
</dbReference>
<dbReference type="EnsemblMetazoa" id="Y37D8A.9b.1">
    <molecule id="A7DTF0-1"/>
    <property type="protein sequence ID" value="Y37D8A.9b.1"/>
    <property type="gene ID" value="WBGene00003406"/>
</dbReference>
<dbReference type="GeneID" id="176702"/>
<dbReference type="KEGG" id="cel:CELE_Y37D8A.9"/>
<dbReference type="UCSC" id="Y37D8A.9b.1">
    <property type="organism name" value="c. elegans"/>
</dbReference>
<dbReference type="AGR" id="WB:WBGene00003406"/>
<dbReference type="CTD" id="176702"/>
<dbReference type="WormBase" id="Y37D8A.9a">
    <molecule id="A7DTF0-2"/>
    <property type="protein sequence ID" value="CE20213"/>
    <property type="gene ID" value="WBGene00003406"/>
    <property type="gene designation" value="mrg-1"/>
</dbReference>
<dbReference type="WormBase" id="Y37D8A.9b">
    <molecule id="A7DTF0-1"/>
    <property type="protein sequence ID" value="CE41465"/>
    <property type="gene ID" value="WBGene00003406"/>
    <property type="gene designation" value="mrg-1"/>
</dbReference>
<dbReference type="eggNOG" id="KOG3001">
    <property type="taxonomic scope" value="Eukaryota"/>
</dbReference>
<dbReference type="GeneTree" id="ENSGT00950000182965"/>
<dbReference type="HOGENOM" id="CLU_039566_0_0_1"/>
<dbReference type="InParanoid" id="A7DTF0"/>
<dbReference type="OMA" id="CVKLAIK"/>
<dbReference type="OrthoDB" id="124855at2759"/>
<dbReference type="PhylomeDB" id="A7DTF0"/>
<dbReference type="PRO" id="PR:A7DTF0"/>
<dbReference type="Proteomes" id="UP000001940">
    <property type="component" value="Chromosome III"/>
</dbReference>
<dbReference type="Bgee" id="WBGene00003406">
    <property type="expression patterns" value="Expressed in germ line (C elegans) and 4 other cell types or tissues"/>
</dbReference>
<dbReference type="ExpressionAtlas" id="A7DTF0">
    <property type="expression patterns" value="baseline and differential"/>
</dbReference>
<dbReference type="GO" id="GO:0030849">
    <property type="term" value="C:autosome"/>
    <property type="evidence" value="ECO:0000314"/>
    <property type="project" value="WormBase"/>
</dbReference>
<dbReference type="GO" id="GO:0000785">
    <property type="term" value="C:chromatin"/>
    <property type="evidence" value="ECO:0000315"/>
    <property type="project" value="UniProtKB"/>
</dbReference>
<dbReference type="GO" id="GO:0000791">
    <property type="term" value="C:euchromatin"/>
    <property type="evidence" value="ECO:0000314"/>
    <property type="project" value="UniProtKB"/>
</dbReference>
<dbReference type="GO" id="GO:0035267">
    <property type="term" value="C:NuA4 histone acetyltransferase complex"/>
    <property type="evidence" value="ECO:0000318"/>
    <property type="project" value="GO_Central"/>
</dbReference>
<dbReference type="GO" id="GO:0005634">
    <property type="term" value="C:nucleus"/>
    <property type="evidence" value="ECO:0007669"/>
    <property type="project" value="UniProtKB-SubCell"/>
</dbReference>
<dbReference type="GO" id="GO:0097240">
    <property type="term" value="P:chromosome attachment to the nuclear envelope"/>
    <property type="evidence" value="ECO:0000315"/>
    <property type="project" value="UniProtKB"/>
</dbReference>
<dbReference type="GO" id="GO:0070192">
    <property type="term" value="P:chromosome organization involved in meiotic cell cycle"/>
    <property type="evidence" value="ECO:0000315"/>
    <property type="project" value="UniProtKB"/>
</dbReference>
<dbReference type="GO" id="GO:0006281">
    <property type="term" value="P:DNA repair"/>
    <property type="evidence" value="ECO:0007669"/>
    <property type="project" value="UniProtKB-KW"/>
</dbReference>
<dbReference type="GO" id="GO:0009792">
    <property type="term" value="P:embryo development ending in birth or egg hatching"/>
    <property type="evidence" value="ECO:0000315"/>
    <property type="project" value="WormBase"/>
</dbReference>
<dbReference type="GO" id="GO:0007281">
    <property type="term" value="P:germ cell development"/>
    <property type="evidence" value="ECO:0000315"/>
    <property type="project" value="UniProtKB"/>
</dbReference>
<dbReference type="GO" id="GO:0031507">
    <property type="term" value="P:heterochromatin formation"/>
    <property type="evidence" value="ECO:0000315"/>
    <property type="project" value="UniProtKB"/>
</dbReference>
<dbReference type="GO" id="GO:0000122">
    <property type="term" value="P:negative regulation of transcription by RNA polymerase II"/>
    <property type="evidence" value="ECO:0000315"/>
    <property type="project" value="WormBase"/>
</dbReference>
<dbReference type="GO" id="GO:0045944">
    <property type="term" value="P:positive regulation of transcription by RNA polymerase II"/>
    <property type="evidence" value="ECO:0000316"/>
    <property type="project" value="WormBase"/>
</dbReference>
<dbReference type="GO" id="GO:1905632">
    <property type="term" value="P:protein localization to euchromatin"/>
    <property type="evidence" value="ECO:0000315"/>
    <property type="project" value="UniProtKB"/>
</dbReference>
<dbReference type="FunFam" id="1.10.274.30:FF:000008">
    <property type="entry name" value="MRG (Mortality factor-Related Gene) related"/>
    <property type="match status" value="1"/>
</dbReference>
<dbReference type="FunFam" id="2.30.30.140:FF:000140">
    <property type="entry name" value="MRG (Mortality factor-Related Gene) related"/>
    <property type="match status" value="1"/>
</dbReference>
<dbReference type="Gene3D" id="2.30.30.140">
    <property type="match status" value="1"/>
</dbReference>
<dbReference type="Gene3D" id="1.10.274.30">
    <property type="entry name" value="MRG domain"/>
    <property type="match status" value="1"/>
</dbReference>
<dbReference type="InterPro" id="IPR016197">
    <property type="entry name" value="Chromo-like_dom_sf"/>
</dbReference>
<dbReference type="InterPro" id="IPR008676">
    <property type="entry name" value="MRG"/>
</dbReference>
<dbReference type="InterPro" id="IPR038217">
    <property type="entry name" value="MRG_C_sf"/>
</dbReference>
<dbReference type="InterPro" id="IPR026541">
    <property type="entry name" value="MRG_dom"/>
</dbReference>
<dbReference type="InterPro" id="IPR053820">
    <property type="entry name" value="MSL3_chromo-like"/>
</dbReference>
<dbReference type="PANTHER" id="PTHR10880:SF48">
    <property type="entry name" value="MORTALITY FACTOR 4 LIKE 2"/>
    <property type="match status" value="1"/>
</dbReference>
<dbReference type="PANTHER" id="PTHR10880">
    <property type="entry name" value="MORTALITY FACTOR 4-LIKE PROTEIN"/>
    <property type="match status" value="1"/>
</dbReference>
<dbReference type="Pfam" id="PF05712">
    <property type="entry name" value="MRG"/>
    <property type="match status" value="1"/>
</dbReference>
<dbReference type="Pfam" id="PF22732">
    <property type="entry name" value="MSL3_chromo-like"/>
    <property type="match status" value="1"/>
</dbReference>
<dbReference type="PIRSF" id="PIRSF038133">
    <property type="entry name" value="HAT_Nua4_EAF3/MRG15"/>
    <property type="match status" value="1"/>
</dbReference>
<dbReference type="SUPFAM" id="SSF54160">
    <property type="entry name" value="Chromo domain-like"/>
    <property type="match status" value="1"/>
</dbReference>
<dbReference type="PROSITE" id="PS51640">
    <property type="entry name" value="MRG"/>
    <property type="match status" value="1"/>
</dbReference>
<evidence type="ECO:0000255" key="1"/>
<evidence type="ECO:0000255" key="2">
    <source>
        <dbReference type="PROSITE-ProRule" id="PRU00972"/>
    </source>
</evidence>
<evidence type="ECO:0000256" key="3">
    <source>
        <dbReference type="SAM" id="MobiDB-lite"/>
    </source>
</evidence>
<evidence type="ECO:0000269" key="4">
    <source>
    </source>
</evidence>
<evidence type="ECO:0000269" key="5">
    <source>
    </source>
</evidence>
<evidence type="ECO:0000269" key="6">
    <source>
    </source>
</evidence>
<evidence type="ECO:0000269" key="7">
    <source>
    </source>
</evidence>
<evidence type="ECO:0000269" key="8">
    <source>
    </source>
</evidence>
<evidence type="ECO:0000269" key="9">
    <source>
    </source>
</evidence>
<evidence type="ECO:0000269" key="10">
    <source>
    </source>
</evidence>
<evidence type="ECO:0000269" key="11">
    <source>
    </source>
</evidence>
<evidence type="ECO:0000269" key="12">
    <source>
    </source>
</evidence>
<evidence type="ECO:0000303" key="13">
    <source>
    </source>
</evidence>
<evidence type="ECO:0000305" key="14"/>
<evidence type="ECO:0000312" key="15">
    <source>
        <dbReference type="Proteomes" id="UP000001940"/>
    </source>
</evidence>
<evidence type="ECO:0000312" key="16">
    <source>
        <dbReference type="WormBase" id="Y37D8A.9a"/>
    </source>
</evidence>
<evidence type="ECO:0000312" key="17">
    <source>
        <dbReference type="WormBase" id="Y37D8A.9b"/>
    </source>
</evidence>
<feature type="chain" id="PRO_0000451596" description="Mortality factor related protein 1">
    <location>
        <begin position="1"/>
        <end position="337"/>
    </location>
</feature>
<feature type="domain" description="Tudor-knot" evidence="1">
    <location>
        <begin position="7"/>
        <end position="55"/>
    </location>
</feature>
<feature type="domain" description="MRG" evidence="2">
    <location>
        <begin position="122"/>
        <end position="327"/>
    </location>
</feature>
<feature type="region of interest" description="Disordered" evidence="3">
    <location>
        <begin position="75"/>
        <end position="113"/>
    </location>
</feature>
<feature type="splice variant" id="VSP_060821" description="In isoform a." evidence="14">
    <location>
        <begin position="216"/>
        <end position="217"/>
    </location>
</feature>
<protein>
    <recommendedName>
        <fullName evidence="13 17">Mortality factor related protein 1</fullName>
    </recommendedName>
</protein>
<accession>A7DTF0</accession>
<accession>Q9XWW2</accession>
<keyword id="KW-0025">Alternative splicing</keyword>
<keyword id="KW-0156">Chromatin regulator</keyword>
<keyword id="KW-0158">Chromosome</keyword>
<keyword id="KW-0227">DNA damage</keyword>
<keyword id="KW-0234">DNA repair</keyword>
<keyword id="KW-0469">Meiosis</keyword>
<keyword id="KW-0539">Nucleus</keyword>
<keyword id="KW-1185">Reference proteome</keyword>
<keyword id="KW-0804">Transcription</keyword>
<keyword id="KW-0805">Transcription regulation</keyword>
<comment type="function">
    <text evidence="4 5 6 7 9 10 11">Protein involved in the remodeling of chromatin thereby regulating various processes including transcription, chromosome synapsis and genome integrity (PubMed:17215300, PubMed:22172672, PubMed:22212480, PubMed:30929290). Mainly binds genomic loci carrying trimethylated histone H3 'Lys-36' (H3K36me3) or 'Lys-4' (H3K4me3), and acetylated histone H3 'Lys-9' (H3K9ac), 'Lys-27' (H3K27ac) (PubMed:30425042, PubMed:31118512). During meiosis, required for the presynaptic pairing of homologous chromosomal regions outside of the pairing center and for the progression of chromosome synapsis (PubMed:22172672, PubMed:22212480). Essential maternal factor required in postembryonic germline development and in maintaining germ cell identity (PubMed:12175490, PubMed:30425042). Plays an important role in maintaining genomic integrity in primordial germ cells (PGCs) during meiosis by regulating DNA double-strand break (DSB) repair and synapsis (PubMed:22212480, PubMed:30929290). Also, required for chromatin-based transcriptional silencing in PGCs and for silencing of X-linked genes in the maternal germ line (PubMed:17215300, PubMed:30929290). By retaining histone acetyltransferase, cbp-1, in euchromatin, promotes the anchoring of heterochromatin at the inner nuclear membrane in intestinal and hypodermal cells (PubMed:31118512).</text>
</comment>
<comment type="subunit">
    <text evidence="8 12">Component of the SIN3S complex, which contains at least sin-3, hda-1, athp-1 and mrg-1 (PubMed:31602465). Interacts with cfp-1, a component of the SET2 complex (PubMed:31602465). Interacts with rfp-1 (PubMed:25564623).</text>
</comment>
<comment type="subcellular location">
    <subcellularLocation>
        <location evidence="5 6">Nucleus</location>
    </subcellularLocation>
    <subcellularLocation>
        <location evidence="5 11">Chromosome</location>
    </subcellularLocation>
    <text evidence="5 11">Concentrated on euchromatic regions marked by H3K36me2/me3 and probably enriched on autosomes.</text>
</comment>
<comment type="alternative products">
    <event type="alternative splicing"/>
    <isoform>
        <id>A7DTF0-1</id>
        <name evidence="17">b</name>
        <sequence type="displayed"/>
    </isoform>
    <isoform>
        <id>A7DTF0-2</id>
        <name evidence="16">a</name>
        <sequence type="described" ref="VSP_060821"/>
    </isoform>
</comment>
<comment type="tissue specificity">
    <text evidence="4 5">Expressed in oocytes (at protein level) (PubMed:12175490). Expressed mainly in germ cells, but also at lower levels in several somatic cell types, including intestinal cells (PubMed:17215300).</text>
</comment>
<comment type="developmental stage">
    <text evidence="4 5 8 10">Expressed in embryos, L1 larvae and adult hermaphrodites and decreases drastically between the L2 and L4 larval stages (at protein level) (PubMed:12175490, PubMed:17215300). In late embryos and young larvae, expressed at higher levels in the two primordial germ cells (PGCs), Z2 and Z3, than in somatic blastomeres (PubMed:17215300, PubMed:30929290). Expressed at a relatively constant level throughout the distal end of the gonad at the L1 stage, with no decrease as cells enter into meiotic prophase (PubMed:25564623).</text>
</comment>
<comment type="disruption phenotype">
    <text evidence="4 5 6 7 8 9 11">Maternal-effect lethality and sterility (PubMed:17215300). Primordial germ cells (PGCs) do not proliferate normally and death of germ cells may be as a result of necrosis or increased apoptosis (PubMed:17215300, PubMed:22212480). Increased proportion of oocytes with fragmented chromosomes as a result of irradiation (PubMed:22212480). Tumorous germline phenotype that is suppressed on a rfp-1;glp-1 double mutant background (PubMed:25564623). Germline progression from leptotene/zygotene to pachytene is defective (PubMed:22212480). Perinuclear anchoring of heterochromatin in intestinal or hypodermal cells is disrupted and exacerbated on a cec-4 mutant background, but is partially blocked by RNAi-mediated knockdown of cbp-1 or atf-8 (PubMed:31118512). RNAi-mediated knockdown causes defective homologous chromosome pairing, complete absence of the germline in almost all adult F1 progeny and slight underdevelopment of the somatic gonad (PubMed:12175490, PubMed:22172672). RNAi-mediated knockdown strongly blocks mitosis of PGCs at early larval stages, and the arrested PGCs may degenerate during late larval stages (PubMed:12175490). RNAi-mediated knockdown induces germ cells to undergo conversion into neuron-like cells (PubMed:30425042). RNAi-mediated knockdown causes a slight increase in levels of the constitutive heterochromatin mark, trimethylated histone H3 'Lys-9' (H3K9me3), and an increase of acetylated histone H3 'Lys-14' (H3K14ac) (PubMed:30425042). Simultaneous RNAi-mediated knockdown of mep-1 suppresses the ectopic expression of pgl-1 protein and the overexpression of pgl-1 mRNA in larvae (PubMed:17215300). RNAi-mediated knockdown induces germ cell apoptosis; however, on clk-2 or cep-1 mutant backgrounds apoptosis is reduced substantially (PubMed:22212480).</text>
</comment>
<name>MRG1_CAEEL</name>
<proteinExistence type="evidence at protein level"/>
<gene>
    <name evidence="13 17" type="primary">mrg-1</name>
    <name evidence="17" type="ORF">Y37D8A.9</name>
</gene>
<organism evidence="15">
    <name type="scientific">Caenorhabditis elegans</name>
    <dbReference type="NCBI Taxonomy" id="6239"/>
    <lineage>
        <taxon>Eukaryota</taxon>
        <taxon>Metazoa</taxon>
        <taxon>Ecdysozoa</taxon>
        <taxon>Nematoda</taxon>
        <taxon>Chromadorea</taxon>
        <taxon>Rhabditida</taxon>
        <taxon>Rhabditina</taxon>
        <taxon>Rhabditomorpha</taxon>
        <taxon>Rhabditoidea</taxon>
        <taxon>Rhabditidae</taxon>
        <taxon>Peloderinae</taxon>
        <taxon>Caenorhabditis</taxon>
    </lineage>
</organism>